<comment type="function">
    <text evidence="1">Required for growth under high-pressure and low-temperature conditions.</text>
</comment>
<comment type="subcellular location">
    <subcellularLocation>
        <location evidence="4">Membrane</location>
        <topology evidence="4">Multi-pass membrane protein</topology>
    </subcellularLocation>
</comment>
<comment type="similarity">
    <text evidence="4">Belongs to the DLT1 family.</text>
</comment>
<proteinExistence type="inferred from homology"/>
<evidence type="ECO:0000250" key="1"/>
<evidence type="ECO:0000255" key="2"/>
<evidence type="ECO:0000256" key="3">
    <source>
        <dbReference type="SAM" id="MobiDB-lite"/>
    </source>
</evidence>
<evidence type="ECO:0000305" key="4"/>
<feature type="chain" id="PRO_0000399021" description="Defect at low temperature protein 1">
    <location>
        <begin position="1"/>
        <end position="326"/>
    </location>
</feature>
<feature type="topological domain" description="Cytoplasmic" evidence="2">
    <location>
        <begin position="1"/>
        <end position="13"/>
    </location>
</feature>
<feature type="transmembrane region" description="Helical" evidence="2">
    <location>
        <begin position="14"/>
        <end position="34"/>
    </location>
</feature>
<feature type="topological domain" description="Extracellular" evidence="2">
    <location>
        <begin position="35"/>
        <end position="45"/>
    </location>
</feature>
<feature type="transmembrane region" description="Helical" evidence="2">
    <location>
        <begin position="46"/>
        <end position="66"/>
    </location>
</feature>
<feature type="topological domain" description="Cytoplasmic" evidence="2">
    <location>
        <begin position="67"/>
        <end position="326"/>
    </location>
</feature>
<feature type="region of interest" description="Disordered" evidence="3">
    <location>
        <begin position="276"/>
        <end position="306"/>
    </location>
</feature>
<feature type="compositionally biased region" description="Polar residues" evidence="3">
    <location>
        <begin position="276"/>
        <end position="291"/>
    </location>
</feature>
<feature type="compositionally biased region" description="Acidic residues" evidence="3">
    <location>
        <begin position="293"/>
        <end position="305"/>
    </location>
</feature>
<reference key="1">
    <citation type="journal article" date="2004" name="Nature">
        <title>Genome evolution in yeasts.</title>
        <authorList>
            <person name="Dujon B."/>
            <person name="Sherman D."/>
            <person name="Fischer G."/>
            <person name="Durrens P."/>
            <person name="Casaregola S."/>
            <person name="Lafontaine I."/>
            <person name="de Montigny J."/>
            <person name="Marck C."/>
            <person name="Neuveglise C."/>
            <person name="Talla E."/>
            <person name="Goffard N."/>
            <person name="Frangeul L."/>
            <person name="Aigle M."/>
            <person name="Anthouard V."/>
            <person name="Babour A."/>
            <person name="Barbe V."/>
            <person name="Barnay S."/>
            <person name="Blanchin S."/>
            <person name="Beckerich J.-M."/>
            <person name="Beyne E."/>
            <person name="Bleykasten C."/>
            <person name="Boisrame A."/>
            <person name="Boyer J."/>
            <person name="Cattolico L."/>
            <person name="Confanioleri F."/>
            <person name="de Daruvar A."/>
            <person name="Despons L."/>
            <person name="Fabre E."/>
            <person name="Fairhead C."/>
            <person name="Ferry-Dumazet H."/>
            <person name="Groppi A."/>
            <person name="Hantraye F."/>
            <person name="Hennequin C."/>
            <person name="Jauniaux N."/>
            <person name="Joyet P."/>
            <person name="Kachouri R."/>
            <person name="Kerrest A."/>
            <person name="Koszul R."/>
            <person name="Lemaire M."/>
            <person name="Lesur I."/>
            <person name="Ma L."/>
            <person name="Muller H."/>
            <person name="Nicaud J.-M."/>
            <person name="Nikolski M."/>
            <person name="Oztas S."/>
            <person name="Ozier-Kalogeropoulos O."/>
            <person name="Pellenz S."/>
            <person name="Potier S."/>
            <person name="Richard G.-F."/>
            <person name="Straub M.-L."/>
            <person name="Suleau A."/>
            <person name="Swennen D."/>
            <person name="Tekaia F."/>
            <person name="Wesolowski-Louvel M."/>
            <person name="Westhof E."/>
            <person name="Wirth B."/>
            <person name="Zeniou-Meyer M."/>
            <person name="Zivanovic Y."/>
            <person name="Bolotin-Fukuhara M."/>
            <person name="Thierry A."/>
            <person name="Bouchier C."/>
            <person name="Caudron B."/>
            <person name="Scarpelli C."/>
            <person name="Gaillardin C."/>
            <person name="Weissenbach J."/>
            <person name="Wincker P."/>
            <person name="Souciet J.-L."/>
        </authorList>
    </citation>
    <scope>NUCLEOTIDE SEQUENCE [LARGE SCALE GENOMIC DNA]</scope>
    <source>
        <strain>ATCC 8585 / CBS 2359 / DSM 70799 / NBRC 1267 / NRRL Y-1140 / WM37</strain>
    </source>
</reference>
<dbReference type="EMBL" id="CR382126">
    <property type="protein sequence ID" value="CAG98574.1"/>
    <property type="molecule type" value="Genomic_DNA"/>
</dbReference>
<dbReference type="RefSeq" id="XP_455866.1">
    <property type="nucleotide sequence ID" value="XM_455866.1"/>
</dbReference>
<dbReference type="FunCoup" id="Q6CJM3">
    <property type="interactions" value="24"/>
</dbReference>
<dbReference type="STRING" id="284590.Q6CJM3"/>
<dbReference type="PaxDb" id="284590-Q6CJM3"/>
<dbReference type="KEGG" id="kla:KLLA0_F17501g"/>
<dbReference type="eggNOG" id="ENOG502RAJJ">
    <property type="taxonomic scope" value="Eukaryota"/>
</dbReference>
<dbReference type="HOGENOM" id="CLU_066044_0_0_1"/>
<dbReference type="InParanoid" id="Q6CJM3"/>
<dbReference type="OMA" id="ITHHEFE"/>
<dbReference type="Proteomes" id="UP000000598">
    <property type="component" value="Chromosome F"/>
</dbReference>
<dbReference type="GO" id="GO:0016020">
    <property type="term" value="C:membrane"/>
    <property type="evidence" value="ECO:0007669"/>
    <property type="project" value="UniProtKB-SubCell"/>
</dbReference>
<dbReference type="InterPro" id="IPR016024">
    <property type="entry name" value="ARM-type_fold"/>
</dbReference>
<dbReference type="InterPro" id="IPR038869">
    <property type="entry name" value="DLT1"/>
</dbReference>
<dbReference type="PANTHER" id="PTHR40021">
    <property type="entry name" value="DEFECT AT LOW TEMPERATURE PROTEIN 1"/>
    <property type="match status" value="1"/>
</dbReference>
<dbReference type="PANTHER" id="PTHR40021:SF1">
    <property type="entry name" value="DEFECT AT LOW TEMPERATURE PROTEIN 1"/>
    <property type="match status" value="1"/>
</dbReference>
<dbReference type="SUPFAM" id="SSF48371">
    <property type="entry name" value="ARM repeat"/>
    <property type="match status" value="1"/>
</dbReference>
<organism>
    <name type="scientific">Kluyveromyces lactis (strain ATCC 8585 / CBS 2359 / DSM 70799 / NBRC 1267 / NRRL Y-1140 / WM37)</name>
    <name type="common">Yeast</name>
    <name type="synonym">Candida sphaerica</name>
    <dbReference type="NCBI Taxonomy" id="284590"/>
    <lineage>
        <taxon>Eukaryota</taxon>
        <taxon>Fungi</taxon>
        <taxon>Dikarya</taxon>
        <taxon>Ascomycota</taxon>
        <taxon>Saccharomycotina</taxon>
        <taxon>Saccharomycetes</taxon>
        <taxon>Saccharomycetales</taxon>
        <taxon>Saccharomycetaceae</taxon>
        <taxon>Kluyveromyces</taxon>
    </lineage>
</organism>
<sequence>MVTSWYKIWYHTTQVIFILLFVGFSVVVPLDCIVQASDSSNDAVNTFIVVGAAVVLVVFGISISFARVLIFRRSLQDIPKKYIPVTAQDMRHKPSREYVIENMKRAGELAEKFKVPKEPVLHAGMEPKDSDMFPEHLKYAEIVKFISDRFRFDGALLLNFVTESDLSTTFKTALHKLFENEKHPYKQYLDEFISLYEKFRFSGQDIERNDFVKFLRLYKYLADLSNNLDLTRIESVPSQFLHVPTEDYDTDARSRTDSEFSTPYLRPYPSDAFMHNTTPASHVGSRSSNFSYDIDESAEPPESVEDQQRYHDMLTRVDTYNTVIHR</sequence>
<protein>
    <recommendedName>
        <fullName>Defect at low temperature protein 1</fullName>
    </recommendedName>
</protein>
<gene>
    <name type="primary">DLT1</name>
    <name type="ordered locus">KLLA0F17501g</name>
</gene>
<accession>Q6CJM3</accession>
<name>DLT1_KLULA</name>
<keyword id="KW-0472">Membrane</keyword>
<keyword id="KW-1185">Reference proteome</keyword>
<keyword id="KW-0812">Transmembrane</keyword>
<keyword id="KW-1133">Transmembrane helix</keyword>